<name>RNC_LISMF</name>
<gene>
    <name evidence="1" type="primary">rnc</name>
    <name type="ordered locus">LMOf2365_1832</name>
</gene>
<sequence>MNQWEELQESVGFDFKDVELLKQAFTHSSYVNEHRRENVKDNERLEFLGDAVLELTVSNYLFNKYPDMAEGHMTKMRAAIVCEPSLVEFAEAVHFSKYVRLGKGEEKAGGRTRPALLADVFESFIGALYLDNGIDKVVTFLERVIFPKIDAGAYLQTVDYKTQLQEIVQRDRDVLIEYDILGETGPAHNKAFDAQVIVNGQVLGKGSGRTKKQAEQSAAQFAINQLTHR</sequence>
<keyword id="KW-0963">Cytoplasm</keyword>
<keyword id="KW-0255">Endonuclease</keyword>
<keyword id="KW-0378">Hydrolase</keyword>
<keyword id="KW-0460">Magnesium</keyword>
<keyword id="KW-0479">Metal-binding</keyword>
<keyword id="KW-0507">mRNA processing</keyword>
<keyword id="KW-0540">Nuclease</keyword>
<keyword id="KW-0694">RNA-binding</keyword>
<keyword id="KW-0698">rRNA processing</keyword>
<keyword id="KW-0699">rRNA-binding</keyword>
<keyword id="KW-0819">tRNA processing</keyword>
<feature type="chain" id="PRO_0000180408" description="Ribonuclease 3">
    <location>
        <begin position="1"/>
        <end position="229"/>
    </location>
</feature>
<feature type="domain" description="RNase III" evidence="1">
    <location>
        <begin position="4"/>
        <end position="133"/>
    </location>
</feature>
<feature type="domain" description="DRBM" evidence="1">
    <location>
        <begin position="159"/>
        <end position="228"/>
    </location>
</feature>
<feature type="active site" evidence="1">
    <location>
        <position position="50"/>
    </location>
</feature>
<feature type="active site" evidence="1">
    <location>
        <position position="122"/>
    </location>
</feature>
<feature type="binding site" evidence="1">
    <location>
        <position position="46"/>
    </location>
    <ligand>
        <name>Mg(2+)</name>
        <dbReference type="ChEBI" id="CHEBI:18420"/>
    </ligand>
</feature>
<feature type="binding site" evidence="1">
    <location>
        <position position="119"/>
    </location>
    <ligand>
        <name>Mg(2+)</name>
        <dbReference type="ChEBI" id="CHEBI:18420"/>
    </ligand>
</feature>
<feature type="binding site" evidence="1">
    <location>
        <position position="122"/>
    </location>
    <ligand>
        <name>Mg(2+)</name>
        <dbReference type="ChEBI" id="CHEBI:18420"/>
    </ligand>
</feature>
<accession>Q71YL2</accession>
<reference key="1">
    <citation type="journal article" date="2004" name="Nucleic Acids Res.">
        <title>Whole genome comparisons of serotype 4b and 1/2a strains of the food-borne pathogen Listeria monocytogenes reveal new insights into the core genome components of this species.</title>
        <authorList>
            <person name="Nelson K.E."/>
            <person name="Fouts D.E."/>
            <person name="Mongodin E.F."/>
            <person name="Ravel J."/>
            <person name="DeBoy R.T."/>
            <person name="Kolonay J.F."/>
            <person name="Rasko D.A."/>
            <person name="Angiuoli S.V."/>
            <person name="Gill S.R."/>
            <person name="Paulsen I.T."/>
            <person name="Peterson J.D."/>
            <person name="White O."/>
            <person name="Nelson W.C."/>
            <person name="Nierman W.C."/>
            <person name="Beanan M.J."/>
            <person name="Brinkac L.M."/>
            <person name="Daugherty S.C."/>
            <person name="Dodson R.J."/>
            <person name="Durkin A.S."/>
            <person name="Madupu R."/>
            <person name="Haft D.H."/>
            <person name="Selengut J."/>
            <person name="Van Aken S.E."/>
            <person name="Khouri H.M."/>
            <person name="Fedorova N."/>
            <person name="Forberger H.A."/>
            <person name="Tran B."/>
            <person name="Kathariou S."/>
            <person name="Wonderling L.D."/>
            <person name="Uhlich G.A."/>
            <person name="Bayles D.O."/>
            <person name="Luchansky J.B."/>
            <person name="Fraser C.M."/>
        </authorList>
    </citation>
    <scope>NUCLEOTIDE SEQUENCE [LARGE SCALE GENOMIC DNA]</scope>
    <source>
        <strain>F2365</strain>
    </source>
</reference>
<protein>
    <recommendedName>
        <fullName evidence="1">Ribonuclease 3</fullName>
        <ecNumber evidence="1">3.1.26.3</ecNumber>
    </recommendedName>
    <alternativeName>
        <fullName evidence="1">Ribonuclease III</fullName>
        <shortName evidence="1">RNase III</shortName>
    </alternativeName>
</protein>
<organism>
    <name type="scientific">Listeria monocytogenes serotype 4b (strain F2365)</name>
    <dbReference type="NCBI Taxonomy" id="265669"/>
    <lineage>
        <taxon>Bacteria</taxon>
        <taxon>Bacillati</taxon>
        <taxon>Bacillota</taxon>
        <taxon>Bacilli</taxon>
        <taxon>Bacillales</taxon>
        <taxon>Listeriaceae</taxon>
        <taxon>Listeria</taxon>
    </lineage>
</organism>
<evidence type="ECO:0000255" key="1">
    <source>
        <dbReference type="HAMAP-Rule" id="MF_00104"/>
    </source>
</evidence>
<proteinExistence type="inferred from homology"/>
<comment type="function">
    <text evidence="1">Digests double-stranded RNA. Involved in the processing of primary rRNA transcript to yield the immediate precursors to the large and small rRNAs (23S and 16S). Processes some mRNAs, and tRNAs when they are encoded in the rRNA operon. Processes pre-crRNA and tracrRNA of type II CRISPR loci if present in the organism.</text>
</comment>
<comment type="catalytic activity">
    <reaction evidence="1">
        <text>Endonucleolytic cleavage to 5'-phosphomonoester.</text>
        <dbReference type="EC" id="3.1.26.3"/>
    </reaction>
</comment>
<comment type="cofactor">
    <cofactor evidence="1">
        <name>Mg(2+)</name>
        <dbReference type="ChEBI" id="CHEBI:18420"/>
    </cofactor>
</comment>
<comment type="subunit">
    <text evidence="1">Homodimer.</text>
</comment>
<comment type="subcellular location">
    <subcellularLocation>
        <location evidence="1">Cytoplasm</location>
    </subcellularLocation>
</comment>
<comment type="similarity">
    <text evidence="1">Belongs to the ribonuclease III family.</text>
</comment>
<dbReference type="EC" id="3.1.26.3" evidence="1"/>
<dbReference type="EMBL" id="AE017262">
    <property type="protein sequence ID" value="AAT04602.1"/>
    <property type="molecule type" value="Genomic_DNA"/>
</dbReference>
<dbReference type="RefSeq" id="WP_003726332.1">
    <property type="nucleotide sequence ID" value="NC_002973.6"/>
</dbReference>
<dbReference type="SMR" id="Q71YL2"/>
<dbReference type="KEGG" id="lmf:LMOf2365_1832"/>
<dbReference type="HOGENOM" id="CLU_000907_1_3_9"/>
<dbReference type="GO" id="GO:0005737">
    <property type="term" value="C:cytoplasm"/>
    <property type="evidence" value="ECO:0007669"/>
    <property type="project" value="UniProtKB-SubCell"/>
</dbReference>
<dbReference type="GO" id="GO:0003725">
    <property type="term" value="F:double-stranded RNA binding"/>
    <property type="evidence" value="ECO:0007669"/>
    <property type="project" value="TreeGrafter"/>
</dbReference>
<dbReference type="GO" id="GO:0046872">
    <property type="term" value="F:metal ion binding"/>
    <property type="evidence" value="ECO:0007669"/>
    <property type="project" value="UniProtKB-KW"/>
</dbReference>
<dbReference type="GO" id="GO:0004525">
    <property type="term" value="F:ribonuclease III activity"/>
    <property type="evidence" value="ECO:0007669"/>
    <property type="project" value="UniProtKB-UniRule"/>
</dbReference>
<dbReference type="GO" id="GO:0019843">
    <property type="term" value="F:rRNA binding"/>
    <property type="evidence" value="ECO:0007669"/>
    <property type="project" value="UniProtKB-KW"/>
</dbReference>
<dbReference type="GO" id="GO:0006397">
    <property type="term" value="P:mRNA processing"/>
    <property type="evidence" value="ECO:0007669"/>
    <property type="project" value="UniProtKB-UniRule"/>
</dbReference>
<dbReference type="GO" id="GO:0010468">
    <property type="term" value="P:regulation of gene expression"/>
    <property type="evidence" value="ECO:0007669"/>
    <property type="project" value="TreeGrafter"/>
</dbReference>
<dbReference type="GO" id="GO:0006364">
    <property type="term" value="P:rRNA processing"/>
    <property type="evidence" value="ECO:0007669"/>
    <property type="project" value="UniProtKB-UniRule"/>
</dbReference>
<dbReference type="GO" id="GO:0008033">
    <property type="term" value="P:tRNA processing"/>
    <property type="evidence" value="ECO:0007669"/>
    <property type="project" value="UniProtKB-KW"/>
</dbReference>
<dbReference type="CDD" id="cd10845">
    <property type="entry name" value="DSRM_RNAse_III_family"/>
    <property type="match status" value="1"/>
</dbReference>
<dbReference type="CDD" id="cd00593">
    <property type="entry name" value="RIBOc"/>
    <property type="match status" value="1"/>
</dbReference>
<dbReference type="FunFam" id="1.10.1520.10:FF:000001">
    <property type="entry name" value="Ribonuclease 3"/>
    <property type="match status" value="1"/>
</dbReference>
<dbReference type="FunFam" id="3.30.160.20:FF:000003">
    <property type="entry name" value="Ribonuclease 3"/>
    <property type="match status" value="1"/>
</dbReference>
<dbReference type="Gene3D" id="3.30.160.20">
    <property type="match status" value="1"/>
</dbReference>
<dbReference type="Gene3D" id="1.10.1520.10">
    <property type="entry name" value="Ribonuclease III domain"/>
    <property type="match status" value="1"/>
</dbReference>
<dbReference type="HAMAP" id="MF_00104">
    <property type="entry name" value="RNase_III"/>
    <property type="match status" value="1"/>
</dbReference>
<dbReference type="InterPro" id="IPR014720">
    <property type="entry name" value="dsRBD_dom"/>
</dbReference>
<dbReference type="InterPro" id="IPR011907">
    <property type="entry name" value="RNase_III"/>
</dbReference>
<dbReference type="InterPro" id="IPR000999">
    <property type="entry name" value="RNase_III_dom"/>
</dbReference>
<dbReference type="InterPro" id="IPR036389">
    <property type="entry name" value="RNase_III_sf"/>
</dbReference>
<dbReference type="NCBIfam" id="TIGR02191">
    <property type="entry name" value="RNaseIII"/>
    <property type="match status" value="1"/>
</dbReference>
<dbReference type="PANTHER" id="PTHR11207:SF0">
    <property type="entry name" value="RIBONUCLEASE 3"/>
    <property type="match status" value="1"/>
</dbReference>
<dbReference type="PANTHER" id="PTHR11207">
    <property type="entry name" value="RIBONUCLEASE III"/>
    <property type="match status" value="1"/>
</dbReference>
<dbReference type="Pfam" id="PF00035">
    <property type="entry name" value="dsrm"/>
    <property type="match status" value="1"/>
</dbReference>
<dbReference type="Pfam" id="PF14622">
    <property type="entry name" value="Ribonucleas_3_3"/>
    <property type="match status" value="1"/>
</dbReference>
<dbReference type="SMART" id="SM00358">
    <property type="entry name" value="DSRM"/>
    <property type="match status" value="1"/>
</dbReference>
<dbReference type="SMART" id="SM00535">
    <property type="entry name" value="RIBOc"/>
    <property type="match status" value="1"/>
</dbReference>
<dbReference type="SUPFAM" id="SSF54768">
    <property type="entry name" value="dsRNA-binding domain-like"/>
    <property type="match status" value="1"/>
</dbReference>
<dbReference type="SUPFAM" id="SSF69065">
    <property type="entry name" value="RNase III domain-like"/>
    <property type="match status" value="1"/>
</dbReference>
<dbReference type="PROSITE" id="PS50137">
    <property type="entry name" value="DS_RBD"/>
    <property type="match status" value="1"/>
</dbReference>
<dbReference type="PROSITE" id="PS00517">
    <property type="entry name" value="RNASE_3_1"/>
    <property type="match status" value="1"/>
</dbReference>
<dbReference type="PROSITE" id="PS50142">
    <property type="entry name" value="RNASE_3_2"/>
    <property type="match status" value="1"/>
</dbReference>